<dbReference type="EMBL" id="U12684">
    <property type="protein sequence ID" value="AAB60161.1"/>
    <property type="molecule type" value="Genomic_DNA"/>
</dbReference>
<dbReference type="EMBL" id="U18997">
    <property type="protein sequence ID" value="AAA58002.1"/>
    <property type="molecule type" value="Genomic_DNA"/>
</dbReference>
<dbReference type="EMBL" id="U00096">
    <property type="protein sequence ID" value="AAC76232.1"/>
    <property type="molecule type" value="Genomic_DNA"/>
</dbReference>
<dbReference type="EMBL" id="AP009048">
    <property type="protein sequence ID" value="BAE77244.1"/>
    <property type="molecule type" value="Genomic_DNA"/>
</dbReference>
<dbReference type="PIR" id="B65111">
    <property type="entry name" value="B65111"/>
</dbReference>
<dbReference type="RefSeq" id="NP_417667.1">
    <property type="nucleotide sequence ID" value="NC_000913.3"/>
</dbReference>
<dbReference type="RefSeq" id="WP_000669785.1">
    <property type="nucleotide sequence ID" value="NZ_STEB01000012.1"/>
</dbReference>
<dbReference type="PDB" id="2R19">
    <property type="method" value="X-ray"/>
    <property type="resolution" value="2.16 A"/>
    <property type="chains" value="A/B=27-185"/>
</dbReference>
<dbReference type="PDB" id="2R1A">
    <property type="method" value="X-ray"/>
    <property type="resolution" value="3.26 A"/>
    <property type="chains" value="A/B/C/D/E/F/G/H=27-185"/>
</dbReference>
<dbReference type="PDB" id="6GD5">
    <property type="method" value="NMR"/>
    <property type="chains" value="A=28-144"/>
</dbReference>
<dbReference type="PDB" id="7QS6">
    <property type="method" value="NMR"/>
    <property type="chains" value="A=28-145"/>
</dbReference>
<dbReference type="PDB" id="7ZED">
    <property type="method" value="NMR"/>
    <property type="chains" value="A=28-145"/>
</dbReference>
<dbReference type="PDB" id="8BSS">
    <property type="method" value="NMR"/>
    <property type="chains" value="A=28-159"/>
</dbReference>
<dbReference type="PDB" id="8GAJ">
    <property type="method" value="X-ray"/>
    <property type="resolution" value="2.43 A"/>
    <property type="chains" value="A/C=28-159"/>
</dbReference>
<dbReference type="PDB" id="8GAK">
    <property type="method" value="X-ray"/>
    <property type="resolution" value="1.90 A"/>
    <property type="chains" value="A/C=28-159"/>
</dbReference>
<dbReference type="PDB" id="8GAL">
    <property type="method" value="X-ray"/>
    <property type="resolution" value="1.80 A"/>
    <property type="chains" value="A/C=28-159"/>
</dbReference>
<dbReference type="PDBsum" id="2R19"/>
<dbReference type="PDBsum" id="2R1A"/>
<dbReference type="PDBsum" id="6GD5"/>
<dbReference type="PDBsum" id="7QS6"/>
<dbReference type="PDBsum" id="7ZED"/>
<dbReference type="PDBsum" id="8BSS"/>
<dbReference type="PDBsum" id="8GAJ"/>
<dbReference type="PDBsum" id="8GAK"/>
<dbReference type="PDBsum" id="8GAL"/>
<dbReference type="SMR" id="P0ADV1"/>
<dbReference type="BioGRID" id="4259280">
    <property type="interactions" value="252"/>
</dbReference>
<dbReference type="DIP" id="DIP-12262N"/>
<dbReference type="FunCoup" id="P0ADV1">
    <property type="interactions" value="63"/>
</dbReference>
<dbReference type="IntAct" id="P0ADV1">
    <property type="interactions" value="6"/>
</dbReference>
<dbReference type="STRING" id="511145.b3200"/>
<dbReference type="TCDB" id="1.B.42.1.2">
    <property type="family name" value="the outer membrane lipopolysaccharide export porin (lps-ep) family"/>
</dbReference>
<dbReference type="jPOST" id="P0ADV1"/>
<dbReference type="PaxDb" id="511145-b3200"/>
<dbReference type="EnsemblBacteria" id="AAC76232">
    <property type="protein sequence ID" value="AAC76232"/>
    <property type="gene ID" value="b3200"/>
</dbReference>
<dbReference type="GeneID" id="93778781"/>
<dbReference type="GeneID" id="947920"/>
<dbReference type="KEGG" id="ecj:JW3167"/>
<dbReference type="KEGG" id="eco:b3200"/>
<dbReference type="KEGG" id="ecoc:C3026_17415"/>
<dbReference type="PATRIC" id="fig|1411691.4.peg.3531"/>
<dbReference type="EchoBASE" id="EB2502"/>
<dbReference type="eggNOG" id="COG1934">
    <property type="taxonomic scope" value="Bacteria"/>
</dbReference>
<dbReference type="HOGENOM" id="CLU_095993_2_1_6"/>
<dbReference type="InParanoid" id="P0ADV1"/>
<dbReference type="OMA" id="VPTQQME"/>
<dbReference type="OrthoDB" id="5295619at2"/>
<dbReference type="PhylomeDB" id="P0ADV1"/>
<dbReference type="BioCyc" id="EcoCyc:YHBN-MONOMER"/>
<dbReference type="BioCyc" id="MetaCyc:YHBN-MONOMER"/>
<dbReference type="BRENDA" id="2.7.8.43">
    <property type="organism ID" value="2026"/>
</dbReference>
<dbReference type="EvolutionaryTrace" id="P0ADV1"/>
<dbReference type="PRO" id="PR:P0ADV1"/>
<dbReference type="Proteomes" id="UP000000625">
    <property type="component" value="Chromosome"/>
</dbReference>
<dbReference type="GO" id="GO:0009279">
    <property type="term" value="C:cell outer membrane"/>
    <property type="evidence" value="ECO:0000314"/>
    <property type="project" value="EcoCyc"/>
</dbReference>
<dbReference type="GO" id="GO:0030288">
    <property type="term" value="C:outer membrane-bounded periplasmic space"/>
    <property type="evidence" value="ECO:0000314"/>
    <property type="project" value="EcoCyc"/>
</dbReference>
<dbReference type="GO" id="GO:0042597">
    <property type="term" value="C:periplasmic space"/>
    <property type="evidence" value="ECO:0000314"/>
    <property type="project" value="EcoCyc"/>
</dbReference>
<dbReference type="GO" id="GO:1990351">
    <property type="term" value="C:transporter complex"/>
    <property type="evidence" value="ECO:0000314"/>
    <property type="project" value="EcoCyc"/>
</dbReference>
<dbReference type="GO" id="GO:0017089">
    <property type="term" value="F:glycolipid transfer activity"/>
    <property type="evidence" value="ECO:0000315"/>
    <property type="project" value="EcoCyc"/>
</dbReference>
<dbReference type="GO" id="GO:0042802">
    <property type="term" value="F:identical protein binding"/>
    <property type="evidence" value="ECO:0000314"/>
    <property type="project" value="EcoCyc"/>
</dbReference>
<dbReference type="GO" id="GO:0001530">
    <property type="term" value="F:lipopolysaccharide binding"/>
    <property type="evidence" value="ECO:0007669"/>
    <property type="project" value="InterPro"/>
</dbReference>
<dbReference type="GO" id="GO:0043165">
    <property type="term" value="P:Gram-negative-bacterium-type cell outer membrane assembly"/>
    <property type="evidence" value="ECO:0007669"/>
    <property type="project" value="UniProtKB-UniRule"/>
</dbReference>
<dbReference type="GO" id="GO:0015920">
    <property type="term" value="P:lipopolysaccharide transport"/>
    <property type="evidence" value="ECO:0000315"/>
    <property type="project" value="EcoCyc"/>
</dbReference>
<dbReference type="FunFam" id="2.60.450.10:FF:000002">
    <property type="entry name" value="Lipopolysaccharide export system protein LptA"/>
    <property type="match status" value="1"/>
</dbReference>
<dbReference type="Gene3D" id="2.60.450.10">
    <property type="entry name" value="Lipopolysaccharide (LPS) transport protein A like domain"/>
    <property type="match status" value="1"/>
</dbReference>
<dbReference type="HAMAP" id="MF_01914">
    <property type="entry name" value="LPS_assembly_LptA"/>
    <property type="match status" value="1"/>
</dbReference>
<dbReference type="InterPro" id="IPR052037">
    <property type="entry name" value="LPS_export_LptA"/>
</dbReference>
<dbReference type="InterPro" id="IPR014340">
    <property type="entry name" value="LptA"/>
</dbReference>
<dbReference type="InterPro" id="IPR005653">
    <property type="entry name" value="OstA-like_N"/>
</dbReference>
<dbReference type="NCBIfam" id="TIGR03002">
    <property type="entry name" value="outer_YhbN_LptA"/>
    <property type="match status" value="1"/>
</dbReference>
<dbReference type="NCBIfam" id="NF008143">
    <property type="entry name" value="PRK10894.1"/>
    <property type="match status" value="1"/>
</dbReference>
<dbReference type="PANTHER" id="PTHR36504">
    <property type="entry name" value="LIPOPOLYSACCHARIDE EXPORT SYSTEM PROTEIN LPTA"/>
    <property type="match status" value="1"/>
</dbReference>
<dbReference type="PANTHER" id="PTHR36504:SF1">
    <property type="entry name" value="LIPOPOLYSACCHARIDE EXPORT SYSTEM PROTEIN LPTA"/>
    <property type="match status" value="1"/>
</dbReference>
<dbReference type="Pfam" id="PF03968">
    <property type="entry name" value="LptD_N"/>
    <property type="match status" value="1"/>
</dbReference>
<comment type="function">
    <text evidence="1 3 4 5 6 9">Involved in the assembly of lipopolysaccharide (LPS). Required for the translocation of LPS from the inner membrane to the outer membrane. May form a bridge between the inner membrane and the outer membrane, via interactions with LptC and LptD, thereby facilitating LPS transfer across the periplasm.</text>
</comment>
<comment type="subunit">
    <text evidence="1 5 6 7 8 9 10 11 12">Component of the lipopolysaccharide transport and assembly complex. Can form head-to-tail homodimers and oligomers. Interacts with LptC, LptD and with the lipid A domain of LPS.</text>
</comment>
<comment type="interaction">
    <interactant intactId="EBI-1132001">
        <id>P0ADV1</id>
    </interactant>
    <interactant intactId="EBI-1131969">
        <id>P0ADV9</id>
        <label>lptC</label>
    </interactant>
    <organismsDiffer>false</organismsDiffer>
    <experiments>3</experiments>
</comment>
<comment type="interaction">
    <interactant intactId="EBI-1132001">
        <id>P0ADV1</id>
    </interactant>
    <interactant intactId="EBI-549369">
        <id>P31554</id>
        <label>lptD</label>
    </interactant>
    <organismsDiffer>false</organismsDiffer>
    <experiments>4</experiments>
</comment>
<comment type="subcellular location">
    <subcellularLocation>
        <location evidence="1 4 6 8">Periplasm</location>
    </subcellularLocation>
    <text>Associates with both the inner membrane and the outer membrane.</text>
</comment>
<comment type="induction">
    <text evidence="4">Transcriptionally regulated by sigma-E factor.</text>
</comment>
<comment type="domain">
    <text evidence="11">The N-terminal domain interacts with LptC, at the inner membrane, and the C-terminal domain interacts with LptD, at the outer membrane.</text>
</comment>
<comment type="disruption phenotype">
    <text evidence="3">Results in an earlier growth arrest and onset of cell lethality.</text>
</comment>
<comment type="similarity">
    <text evidence="1">Belongs to the LptA family.</text>
</comment>
<keyword id="KW-0002">3D-structure</keyword>
<keyword id="KW-0903">Direct protein sequencing</keyword>
<keyword id="KW-0574">Periplasm</keyword>
<keyword id="KW-1185">Reference proteome</keyword>
<keyword id="KW-0732">Signal</keyword>
<keyword id="KW-0813">Transport</keyword>
<organism>
    <name type="scientific">Escherichia coli (strain K12)</name>
    <dbReference type="NCBI Taxonomy" id="83333"/>
    <lineage>
        <taxon>Bacteria</taxon>
        <taxon>Pseudomonadati</taxon>
        <taxon>Pseudomonadota</taxon>
        <taxon>Gammaproteobacteria</taxon>
        <taxon>Enterobacterales</taxon>
        <taxon>Enterobacteriaceae</taxon>
        <taxon>Escherichia</taxon>
    </lineage>
</organism>
<reference key="1">
    <citation type="journal article" date="1995" name="J. Biol. Chem.">
        <title>Novel proteins of the phosphotransferase system encoded within the rpoN operon of Escherichia coli. Enzyme IIANtr affects growth on organic nitrogen and the conditional lethality of an erats mutant.</title>
        <authorList>
            <person name="Powell B.S."/>
            <person name="Court D.L."/>
            <person name="Inada T."/>
            <person name="Nakamura Y."/>
            <person name="Michotey V."/>
            <person name="Cui X."/>
            <person name="Reizer A."/>
            <person name="Saier M.H. Jr."/>
            <person name="Reizer J."/>
        </authorList>
    </citation>
    <scope>NUCLEOTIDE SEQUENCE [GENOMIC DNA]</scope>
    <source>
        <strain>K12 / W3110 / ATCC 27325 / DSM 5911</strain>
    </source>
</reference>
<reference key="2">
    <citation type="journal article" date="1997" name="Science">
        <title>The complete genome sequence of Escherichia coli K-12.</title>
        <authorList>
            <person name="Blattner F.R."/>
            <person name="Plunkett G. III"/>
            <person name="Bloch C.A."/>
            <person name="Perna N.T."/>
            <person name="Burland V."/>
            <person name="Riley M."/>
            <person name="Collado-Vides J."/>
            <person name="Glasner J.D."/>
            <person name="Rode C.K."/>
            <person name="Mayhew G.F."/>
            <person name="Gregor J."/>
            <person name="Davis N.W."/>
            <person name="Kirkpatrick H.A."/>
            <person name="Goeden M.A."/>
            <person name="Rose D.J."/>
            <person name="Mau B."/>
            <person name="Shao Y."/>
        </authorList>
    </citation>
    <scope>NUCLEOTIDE SEQUENCE [LARGE SCALE GENOMIC DNA]</scope>
    <source>
        <strain>K12 / MG1655 / ATCC 47076</strain>
    </source>
</reference>
<reference key="3">
    <citation type="journal article" date="2006" name="Mol. Syst. Biol.">
        <title>Highly accurate genome sequences of Escherichia coli K-12 strains MG1655 and W3110.</title>
        <authorList>
            <person name="Hayashi K."/>
            <person name="Morooka N."/>
            <person name="Yamamoto Y."/>
            <person name="Fujita K."/>
            <person name="Isono K."/>
            <person name="Choi S."/>
            <person name="Ohtsubo E."/>
            <person name="Baba T."/>
            <person name="Wanner B.L."/>
            <person name="Mori H."/>
            <person name="Horiuchi T."/>
        </authorList>
    </citation>
    <scope>NUCLEOTIDE SEQUENCE [LARGE SCALE GENOMIC DNA]</scope>
    <source>
        <strain>K12 / W3110 / ATCC 27325 / DSM 5911</strain>
    </source>
</reference>
<reference key="4">
    <citation type="journal article" date="1997" name="Electrophoresis">
        <title>Comparing the predicted and observed properties of proteins encoded in the genome of Escherichia coli K-12.</title>
        <authorList>
            <person name="Link A.J."/>
            <person name="Robison K."/>
            <person name="Church G.M."/>
        </authorList>
    </citation>
    <scope>PROTEIN SEQUENCE OF 28-39</scope>
    <source>
        <strain>K12 / EMG2</strain>
    </source>
</reference>
<reference key="5">
    <citation type="journal article" date="2006" name="Res. Microbiol.">
        <title>Non-essential KDO biosynthesis and new essential cell envelope biogenesis genes in the Escherichia coli yrbG-yhbG locus.</title>
        <authorList>
            <person name="Sperandeo P."/>
            <person name="Pozzi C."/>
            <person name="Deho G."/>
            <person name="Polissi A."/>
        </authorList>
    </citation>
    <scope>FUNCTION IN LPS BIOSYNTHESIS</scope>
    <scope>DISRUPTION PHENOTYPE</scope>
</reference>
<reference key="6">
    <citation type="journal article" date="2007" name="J. Bacteriol.">
        <title>Characterization of lptA and lptB, two essential genes implicated in lipopolysaccharide transport to the outer membrane of Escherichia coli.</title>
        <authorList>
            <person name="Sperandeo P."/>
            <person name="Cescutti R."/>
            <person name="Villa R."/>
            <person name="Di Benedetto C."/>
            <person name="Candia D."/>
            <person name="Deho G."/>
            <person name="Polissi A."/>
        </authorList>
    </citation>
    <scope>FUNCTION IN LIPOPOLYSACCHARIDE TRANSPORT</scope>
    <scope>SUBCELLULAR LOCATION</scope>
    <scope>INDUCTION</scope>
</reference>
<reference key="7">
    <citation type="journal article" date="2008" name="J. Bacteriol.">
        <title>Functional analysis of the protein machinery required for transport of lipopolysaccharide to the outer membrane of Escherichia coli.</title>
        <authorList>
            <person name="Sperandeo P."/>
            <person name="Lau F.K."/>
            <person name="Carpentieri A."/>
            <person name="De Castro C."/>
            <person name="Molinaro A."/>
            <person name="Deho G."/>
            <person name="Silhavy T.J."/>
            <person name="Polissi A."/>
        </authorList>
    </citation>
    <scope>FUNCTION IN LIPOPOLYSACCHARIDE TRANSPORT</scope>
    <scope>SUBUNIT</scope>
    <source>
        <strain>K12 / MC4100 / ATCC 35695 / DSM 6574</strain>
    </source>
</reference>
<reference key="8">
    <citation type="journal article" date="2008" name="J. Biol. Chem.">
        <title>The LptA protein of Escherichia coli is a periplasmic lipid A-binding protein involved in the lipopolysaccharide export pathway.</title>
        <authorList>
            <person name="Tran A.X."/>
            <person name="Trent M.S."/>
            <person name="Whitfield C."/>
        </authorList>
    </citation>
    <scope>FUNCTION IN LIPOPOLYSACCHARIDE TRANSPORT</scope>
    <scope>SUBUNIT</scope>
    <scope>SUBCELLULAR LOCATION</scope>
    <scope>LIPID A-BINDING</scope>
    <source>
        <strain>K12 / W3110 / ATCC 27325 / DSM 5911</strain>
    </source>
</reference>
<reference key="9">
    <citation type="journal article" date="2010" name="Biochemistry">
        <title>Proteins required for lipopolysaccharide assembly in Escherichia coli form a transenvelope complex.</title>
        <authorList>
            <person name="Chng S.S."/>
            <person name="Gronenberg L.S."/>
            <person name="Kahne D."/>
        </authorList>
    </citation>
    <scope>SUBCELLULAR LOCATION</scope>
    <scope>SUBUNIT</scope>
</reference>
<reference key="10">
    <citation type="journal article" date="2011" name="Biochem. Biophys. Res. Commun.">
        <title>Characterization of interactions between LPS transport proteins of the Lpt system.</title>
        <authorList>
            <person name="Bowyer A."/>
            <person name="Baardsnes J."/>
            <person name="Ajamian E."/>
            <person name="Zhang L."/>
            <person name="Cygler M."/>
        </authorList>
    </citation>
    <scope>INTERACTION WITH LPTC</scope>
    <source>
        <strain>K12</strain>
    </source>
</reference>
<reference key="11">
    <citation type="journal article" date="2011" name="J. Bacteriol.">
        <title>New insights into the Lpt machinery for lipopolysaccharide transport to the cell surface: LptA-LptC interaction and LptA stability as sensors of a properly assembled transenvelope complex.</title>
        <authorList>
            <person name="Sperandeo P."/>
            <person name="Villa R."/>
            <person name="Martorana A.M."/>
            <person name="Samalikova M."/>
            <person name="Grandori R."/>
            <person name="Deho G."/>
            <person name="Polissi A."/>
        </authorList>
    </citation>
    <scope>FUNCTION</scope>
    <scope>INTERACTION WITH LPTC</scope>
</reference>
<reference key="12">
    <citation type="journal article" date="2012" name="Biochemistry">
        <title>Regulated assembly of the transenvelope protein complex required for lipopolysaccharide export.</title>
        <authorList>
            <person name="Freinkman E."/>
            <person name="Okuda S."/>
            <person name="Ruiz N."/>
            <person name="Kahne D."/>
        </authorList>
    </citation>
    <scope>SUBUNIT</scope>
    <scope>INTERACTION WITH LPTC AND LPTD</scope>
    <scope>DOMAIN</scope>
</reference>
<reference key="13">
    <citation type="journal article" date="2015" name="FEBS J.">
        <title>Crystal structure of LptH, the periplasmic component of the lipopolysaccharide transport machinery from Pseudomonas aeruginosa.</title>
        <authorList>
            <person name="Bollati M."/>
            <person name="Villa R."/>
            <person name="Gourlay L.J."/>
            <person name="Benedet M."/>
            <person name="Deho G."/>
            <person name="Polissi A."/>
            <person name="Barbiroli A."/>
            <person name="Martorana A.M."/>
            <person name="Sperandeo P."/>
            <person name="Bolognesi M."/>
            <person name="Nardini M."/>
        </authorList>
    </citation>
    <scope>SUBUNIT</scope>
    <scope>MUTAGENESIS OF GLY-138</scope>
</reference>
<reference key="14">
    <citation type="journal article" date="2008" name="J. Mol. Biol.">
        <title>Novel structure of the conserved Gram-negative lipopolysaccharide transport protein A and mutagenesis analysis.</title>
        <authorList>
            <person name="Suits M.D.L."/>
            <person name="Sperandeo P."/>
            <person name="Deho G."/>
            <person name="Polissi A."/>
            <person name="Jia Z."/>
        </authorList>
    </citation>
    <scope>X-RAY CRYSTALLOGRAPHY (2.16 ANGSTROMS) OF 27-185</scope>
    <scope>SUBUNIT</scope>
    <scope>MUTAGENESIS OF ILE-36; ILE-38; ARG-76 AND PHE-95</scope>
    <source>
        <strain>K12</strain>
    </source>
</reference>
<evidence type="ECO:0000255" key="1">
    <source>
        <dbReference type="HAMAP-Rule" id="MF_01914"/>
    </source>
</evidence>
<evidence type="ECO:0000256" key="2">
    <source>
        <dbReference type="SAM" id="MobiDB-lite"/>
    </source>
</evidence>
<evidence type="ECO:0000269" key="3">
    <source>
    </source>
</evidence>
<evidence type="ECO:0000269" key="4">
    <source>
    </source>
</evidence>
<evidence type="ECO:0000269" key="5">
    <source>
    </source>
</evidence>
<evidence type="ECO:0000269" key="6">
    <source>
    </source>
</evidence>
<evidence type="ECO:0000269" key="7">
    <source>
    </source>
</evidence>
<evidence type="ECO:0000269" key="8">
    <source>
    </source>
</evidence>
<evidence type="ECO:0000269" key="9">
    <source>
    </source>
</evidence>
<evidence type="ECO:0000269" key="10">
    <source>
    </source>
</evidence>
<evidence type="ECO:0000269" key="11">
    <source>
    </source>
</evidence>
<evidence type="ECO:0000269" key="12">
    <source>
    </source>
</evidence>
<evidence type="ECO:0000269" key="13">
    <source>
    </source>
</evidence>
<evidence type="ECO:0007829" key="14">
    <source>
        <dbReference type="PDB" id="2R19"/>
    </source>
</evidence>
<evidence type="ECO:0007829" key="15">
    <source>
        <dbReference type="PDB" id="2R1A"/>
    </source>
</evidence>
<evidence type="ECO:0007829" key="16">
    <source>
        <dbReference type="PDB" id="6GD5"/>
    </source>
</evidence>
<evidence type="ECO:0007829" key="17">
    <source>
        <dbReference type="PDB" id="8BSS"/>
    </source>
</evidence>
<evidence type="ECO:0007829" key="18">
    <source>
        <dbReference type="PDB" id="8GAL"/>
    </source>
</evidence>
<sequence>MKFKTNKLSLNLVLASSLLAASIPAFAVTGDTDQPIHIESDQQSLDMQGNVVTFTGNVIVTQGTIKINADKVVVTRPGGEQGKEVIDGYGKPATFYQMQDNGKPVEGHASQMHYELAKDFVVLTGNAYLQQVDSNIKGDKITYLVKEQKMQAFSDKGKRVTTVLVPSQLQDKNNKGQTPAQKKGN</sequence>
<feature type="signal peptide" evidence="1 13">
    <location>
        <begin position="1"/>
        <end position="27"/>
    </location>
</feature>
<feature type="chain" id="PRO_0000013914" description="Lipopolysaccharide export system protein LptA">
    <location>
        <begin position="28"/>
        <end position="185"/>
    </location>
</feature>
<feature type="region of interest" description="Disordered" evidence="2">
    <location>
        <begin position="166"/>
        <end position="185"/>
    </location>
</feature>
<feature type="mutagenesis site" description="No change in activity." evidence="7">
    <original>I</original>
    <variation>D</variation>
    <variation>E</variation>
    <location>
        <position position="36"/>
    </location>
</feature>
<feature type="mutagenesis site" description="Decrease in activity." evidence="7">
    <original>I</original>
    <variation>D</variation>
    <location>
        <position position="38"/>
    </location>
</feature>
<feature type="mutagenesis site" description="No change in activity." evidence="7">
    <original>I</original>
    <variation>E</variation>
    <location>
        <position position="38"/>
    </location>
</feature>
<feature type="mutagenesis site" description="No change in activity." evidence="7">
    <original>R</original>
    <variation>D</variation>
    <variation>E</variation>
    <location>
        <position position="76"/>
    </location>
</feature>
<feature type="mutagenesis site" description="No change in activity." evidence="7">
    <original>F</original>
    <variation>A</variation>
    <location>
        <position position="95"/>
    </location>
</feature>
<feature type="mutagenesis site" description="Cannot complement E.coli lptA-depleted mutants. Exhibits lower thermal stability. Has a lower propensity to oligomerize." evidence="12">
    <original>G</original>
    <variation>R</variation>
    <location>
        <position position="138"/>
    </location>
</feature>
<feature type="helix" evidence="18">
    <location>
        <begin position="31"/>
        <end position="33"/>
    </location>
</feature>
<feature type="strand" evidence="18">
    <location>
        <begin position="36"/>
        <end position="45"/>
    </location>
</feature>
<feature type="strand" evidence="18">
    <location>
        <begin position="49"/>
        <end position="62"/>
    </location>
</feature>
<feature type="strand" evidence="18">
    <location>
        <begin position="65"/>
        <end position="75"/>
    </location>
</feature>
<feature type="helix" evidence="18">
    <location>
        <begin position="77"/>
        <end position="79"/>
    </location>
</feature>
<feature type="helix" evidence="17">
    <location>
        <begin position="80"/>
        <end position="82"/>
    </location>
</feature>
<feature type="strand" evidence="18">
    <location>
        <begin position="85"/>
        <end position="98"/>
    </location>
</feature>
<feature type="strand" evidence="16">
    <location>
        <begin position="100"/>
        <end position="103"/>
    </location>
</feature>
<feature type="strand" evidence="18">
    <location>
        <begin position="104"/>
        <end position="115"/>
    </location>
</feature>
<feature type="strand" evidence="18">
    <location>
        <begin position="118"/>
        <end position="146"/>
    </location>
</feature>
<feature type="strand" evidence="14">
    <location>
        <begin position="149"/>
        <end position="153"/>
    </location>
</feature>
<feature type="strand" evidence="14">
    <location>
        <begin position="155"/>
        <end position="157"/>
    </location>
</feature>
<feature type="strand" evidence="15">
    <location>
        <begin position="160"/>
        <end position="162"/>
    </location>
</feature>
<protein>
    <recommendedName>
        <fullName evidence="1">Lipopolysaccharide export system protein LptA</fullName>
    </recommendedName>
</protein>
<proteinExistence type="evidence at protein level"/>
<gene>
    <name evidence="1" type="primary">lptA</name>
    <name type="synonym">yhbN</name>
    <name type="ordered locus">b3200</name>
    <name type="ordered locus">JW3167</name>
</gene>
<accession>P0ADV1</accession>
<accession>P38685</accession>
<accession>Q2M912</accession>
<name>LPTA_ECOLI</name>